<proteinExistence type="inferred from homology"/>
<name>ISPD_MYCBT</name>
<evidence type="ECO:0000255" key="1">
    <source>
        <dbReference type="HAMAP-Rule" id="MF_00108"/>
    </source>
</evidence>
<accession>C1AI41</accession>
<protein>
    <recommendedName>
        <fullName evidence="1">2-C-methyl-D-erythritol 4-phosphate cytidylyltransferase</fullName>
        <ecNumber evidence="1">2.7.7.60</ecNumber>
    </recommendedName>
    <alternativeName>
        <fullName evidence="1">4-diphosphocytidyl-2C-methyl-D-erythritol synthase</fullName>
    </alternativeName>
    <alternativeName>
        <fullName evidence="1">MEP cytidylyltransferase</fullName>
        <shortName evidence="1">MCT</shortName>
    </alternativeName>
</protein>
<comment type="function">
    <text evidence="1">Catalyzes the formation of 4-diphosphocytidyl-2-C-methyl-D-erythritol from CTP and 2-C-methyl-D-erythritol 4-phosphate (MEP).</text>
</comment>
<comment type="catalytic activity">
    <reaction evidence="1">
        <text>2-C-methyl-D-erythritol 4-phosphate + CTP + H(+) = 4-CDP-2-C-methyl-D-erythritol + diphosphate</text>
        <dbReference type="Rhea" id="RHEA:13429"/>
        <dbReference type="ChEBI" id="CHEBI:15378"/>
        <dbReference type="ChEBI" id="CHEBI:33019"/>
        <dbReference type="ChEBI" id="CHEBI:37563"/>
        <dbReference type="ChEBI" id="CHEBI:57823"/>
        <dbReference type="ChEBI" id="CHEBI:58262"/>
        <dbReference type="EC" id="2.7.7.60"/>
    </reaction>
</comment>
<comment type="pathway">
    <text evidence="1">Isoprenoid biosynthesis; isopentenyl diphosphate biosynthesis via DXP pathway; isopentenyl diphosphate from 1-deoxy-D-xylulose 5-phosphate: step 2/6.</text>
</comment>
<comment type="similarity">
    <text evidence="1">Belongs to the IspD/TarI cytidylyltransferase family. IspD subfamily.</text>
</comment>
<keyword id="KW-0414">Isoprene biosynthesis</keyword>
<keyword id="KW-0548">Nucleotidyltransferase</keyword>
<keyword id="KW-0808">Transferase</keyword>
<dbReference type="EC" id="2.7.7.60" evidence="1"/>
<dbReference type="EMBL" id="AP010918">
    <property type="protein sequence ID" value="BAH27920.1"/>
    <property type="molecule type" value="Genomic_DNA"/>
</dbReference>
<dbReference type="RefSeq" id="WP_003419436.1">
    <property type="nucleotide sequence ID" value="NZ_CP014566.1"/>
</dbReference>
<dbReference type="SMR" id="C1AI41"/>
<dbReference type="GeneID" id="45427570"/>
<dbReference type="KEGG" id="mbt:JTY_3648"/>
<dbReference type="HOGENOM" id="CLU_061281_1_1_11"/>
<dbReference type="UniPathway" id="UPA00056">
    <property type="reaction ID" value="UER00093"/>
</dbReference>
<dbReference type="GO" id="GO:0050518">
    <property type="term" value="F:2-C-methyl-D-erythritol 4-phosphate cytidylyltransferase activity"/>
    <property type="evidence" value="ECO:0007669"/>
    <property type="project" value="UniProtKB-UniRule"/>
</dbReference>
<dbReference type="GO" id="GO:0019288">
    <property type="term" value="P:isopentenyl diphosphate biosynthetic process, methylerythritol 4-phosphate pathway"/>
    <property type="evidence" value="ECO:0007669"/>
    <property type="project" value="UniProtKB-UniRule"/>
</dbReference>
<dbReference type="CDD" id="cd02516">
    <property type="entry name" value="CDP-ME_synthetase"/>
    <property type="match status" value="1"/>
</dbReference>
<dbReference type="FunFam" id="3.90.550.10:FF:000208">
    <property type="entry name" value="2-C-methyl-D-erythritol 4-phosphate cytidylyltransferase"/>
    <property type="match status" value="1"/>
</dbReference>
<dbReference type="Gene3D" id="3.90.550.10">
    <property type="entry name" value="Spore Coat Polysaccharide Biosynthesis Protein SpsA, Chain A"/>
    <property type="match status" value="1"/>
</dbReference>
<dbReference type="HAMAP" id="MF_00108">
    <property type="entry name" value="IspD"/>
    <property type="match status" value="1"/>
</dbReference>
<dbReference type="InterPro" id="IPR001228">
    <property type="entry name" value="IspD"/>
</dbReference>
<dbReference type="InterPro" id="IPR034683">
    <property type="entry name" value="IspD/TarI"/>
</dbReference>
<dbReference type="InterPro" id="IPR050088">
    <property type="entry name" value="IspD/TarI_cytidylyltransf_bact"/>
</dbReference>
<dbReference type="InterPro" id="IPR018294">
    <property type="entry name" value="ISPD_synthase_CS"/>
</dbReference>
<dbReference type="InterPro" id="IPR029044">
    <property type="entry name" value="Nucleotide-diphossugar_trans"/>
</dbReference>
<dbReference type="NCBIfam" id="TIGR00453">
    <property type="entry name" value="ispD"/>
    <property type="match status" value="1"/>
</dbReference>
<dbReference type="PANTHER" id="PTHR32125">
    <property type="entry name" value="2-C-METHYL-D-ERYTHRITOL 4-PHOSPHATE CYTIDYLYLTRANSFERASE, CHLOROPLASTIC"/>
    <property type="match status" value="1"/>
</dbReference>
<dbReference type="PANTHER" id="PTHR32125:SF4">
    <property type="entry name" value="2-C-METHYL-D-ERYTHRITOL 4-PHOSPHATE CYTIDYLYLTRANSFERASE, CHLOROPLASTIC"/>
    <property type="match status" value="1"/>
</dbReference>
<dbReference type="Pfam" id="PF01128">
    <property type="entry name" value="IspD"/>
    <property type="match status" value="1"/>
</dbReference>
<dbReference type="SUPFAM" id="SSF53448">
    <property type="entry name" value="Nucleotide-diphospho-sugar transferases"/>
    <property type="match status" value="1"/>
</dbReference>
<dbReference type="PROSITE" id="PS01295">
    <property type="entry name" value="ISPD"/>
    <property type="match status" value="1"/>
</dbReference>
<reference key="1">
    <citation type="journal article" date="2009" name="Vaccine">
        <title>Whole genome sequence analysis of Mycobacterium bovis bacillus Calmette-Guerin (BCG) Tokyo 172: a comparative study of BCG vaccine substrains.</title>
        <authorList>
            <person name="Seki M."/>
            <person name="Honda I."/>
            <person name="Fujita I."/>
            <person name="Yano I."/>
            <person name="Yamamoto S."/>
            <person name="Koyama A."/>
        </authorList>
    </citation>
    <scope>NUCLEOTIDE SEQUENCE [LARGE SCALE GENOMIC DNA]</scope>
    <source>
        <strain>BCG / Tokyo 172 / ATCC 35737 / TMC 1019</strain>
    </source>
</reference>
<organism>
    <name type="scientific">Mycobacterium bovis (strain BCG / Tokyo 172 / ATCC 35737 / TMC 1019)</name>
    <dbReference type="NCBI Taxonomy" id="561275"/>
    <lineage>
        <taxon>Bacteria</taxon>
        <taxon>Bacillati</taxon>
        <taxon>Actinomycetota</taxon>
        <taxon>Actinomycetes</taxon>
        <taxon>Mycobacteriales</taxon>
        <taxon>Mycobacteriaceae</taxon>
        <taxon>Mycobacterium</taxon>
        <taxon>Mycobacterium tuberculosis complex</taxon>
    </lineage>
</organism>
<feature type="chain" id="PRO_1000191063" description="2-C-methyl-D-erythritol 4-phosphate cytidylyltransferase">
    <location>
        <begin position="1"/>
        <end position="231"/>
    </location>
</feature>
<feature type="site" description="Transition state stabilizer" evidence="1">
    <location>
        <position position="20"/>
    </location>
</feature>
<feature type="site" description="Transition state stabilizer" evidence="1">
    <location>
        <position position="27"/>
    </location>
</feature>
<feature type="site" description="Positions MEP for the nucleophilic attack" evidence="1">
    <location>
        <position position="157"/>
    </location>
</feature>
<feature type="site" description="Positions MEP for the nucleophilic attack" evidence="1">
    <location>
        <position position="215"/>
    </location>
</feature>
<sequence>MVREAGEVVAIVPAAGSGERLAVGVPKAFYQLDGQTLIERAVDGLLDSGVVDTVVVAVPADRTDEARQILGHRAMIVAGGSNRTDTVNLALTVLSGTAEPEFVLVHDAARALTPPALVARVVEALRDGYAAVVPVLPLSDTIKAVDANGVVLGTPERAGLRAVQTPQGFTTDLLLRSYQRGSLDLPAAEYTDDASLVEHIGGQVQVVDGDPLAFKITTKLDLLLAQAIVRG</sequence>
<gene>
    <name evidence="1" type="primary">ispD</name>
    <name type="ordered locus">JTY_3648</name>
</gene>